<protein>
    <recommendedName>
        <fullName evidence="2">Small ribosomal subunit protein uS4</fullName>
    </recommendedName>
    <alternativeName>
        <fullName>30S ribosomal protein S4</fullName>
    </alternativeName>
</protein>
<reference key="1">
    <citation type="journal article" date="1999" name="Nature">
        <title>Evidence for lateral gene transfer between Archaea and Bacteria from genome sequence of Thermotoga maritima.</title>
        <authorList>
            <person name="Nelson K.E."/>
            <person name="Clayton R.A."/>
            <person name="Gill S.R."/>
            <person name="Gwinn M.L."/>
            <person name="Dodson R.J."/>
            <person name="Haft D.H."/>
            <person name="Hickey E.K."/>
            <person name="Peterson J.D."/>
            <person name="Nelson W.C."/>
            <person name="Ketchum K.A."/>
            <person name="McDonald L.A."/>
            <person name="Utterback T.R."/>
            <person name="Malek J.A."/>
            <person name="Linher K.D."/>
            <person name="Garrett M.M."/>
            <person name="Stewart A.M."/>
            <person name="Cotton M.D."/>
            <person name="Pratt M.S."/>
            <person name="Phillips C.A."/>
            <person name="Richardson D.L."/>
            <person name="Heidelberg J.F."/>
            <person name="Sutton G.G."/>
            <person name="Fleischmann R.D."/>
            <person name="Eisen J.A."/>
            <person name="White O."/>
            <person name="Salzberg S.L."/>
            <person name="Smith H.O."/>
            <person name="Venter J.C."/>
            <person name="Fraser C.M."/>
        </authorList>
    </citation>
    <scope>NUCLEOTIDE SEQUENCE [LARGE SCALE GENOMIC DNA]</scope>
    <source>
        <strain>ATCC 43589 / DSM 3109 / JCM 10099 / NBRC 100826 / MSB8</strain>
    </source>
</reference>
<name>RS4_THEMA</name>
<keyword id="KW-0479">Metal-binding</keyword>
<keyword id="KW-1185">Reference proteome</keyword>
<keyword id="KW-0687">Ribonucleoprotein</keyword>
<keyword id="KW-0689">Ribosomal protein</keyword>
<keyword id="KW-0694">RNA-binding</keyword>
<keyword id="KW-0699">rRNA-binding</keyword>
<keyword id="KW-0862">Zinc</keyword>
<keyword id="KW-0863">Zinc-finger</keyword>
<sequence>MARYTGPLCKLCRREGMKLYLKGERCYTDKCAFDRRPYAPGQHGQRRTKLTQYGIQLRAKQTVKRIYGILERQFERYVEKAMQKAGDTRENLIQILEARLDNVVYRMGFAINRRQARQLVNHGHFLVNGKKVNIPSYLLRPNDVVEVREKSRDLEVIKKAIEANKERSIVPWIEVDYDNYRGTFLRYPSLEEVTDLPVDLQTVIEFYSR</sequence>
<gene>
    <name type="primary">rpsD</name>
    <name type="ordered locus">TM_1473</name>
</gene>
<evidence type="ECO:0000250" key="1"/>
<evidence type="ECO:0000305" key="2"/>
<feature type="chain" id="PRO_0000132481" description="Small ribosomal subunit protein uS4">
    <location>
        <begin position="1"/>
        <end position="209"/>
    </location>
</feature>
<feature type="domain" description="S4 RNA-binding">
    <location>
        <begin position="98"/>
        <end position="161"/>
    </location>
</feature>
<feature type="zinc finger region" description="C4-type" evidence="1">
    <location>
        <begin position="9"/>
        <end position="31"/>
    </location>
</feature>
<feature type="binding site" evidence="1">
    <location>
        <position position="9"/>
    </location>
    <ligand>
        <name>Zn(2+)</name>
        <dbReference type="ChEBI" id="CHEBI:29105"/>
    </ligand>
</feature>
<feature type="binding site" evidence="1">
    <location>
        <position position="12"/>
    </location>
    <ligand>
        <name>Zn(2+)</name>
        <dbReference type="ChEBI" id="CHEBI:29105"/>
    </ligand>
</feature>
<feature type="binding site" evidence="1">
    <location>
        <position position="26"/>
    </location>
    <ligand>
        <name>Zn(2+)</name>
        <dbReference type="ChEBI" id="CHEBI:29105"/>
    </ligand>
</feature>
<feature type="binding site" evidence="1">
    <location>
        <position position="31"/>
    </location>
    <ligand>
        <name>Zn(2+)</name>
        <dbReference type="ChEBI" id="CHEBI:29105"/>
    </ligand>
</feature>
<organism>
    <name type="scientific">Thermotoga maritima (strain ATCC 43589 / DSM 3109 / JCM 10099 / NBRC 100826 / MSB8)</name>
    <dbReference type="NCBI Taxonomy" id="243274"/>
    <lineage>
        <taxon>Bacteria</taxon>
        <taxon>Thermotogati</taxon>
        <taxon>Thermotogota</taxon>
        <taxon>Thermotogae</taxon>
        <taxon>Thermotogales</taxon>
        <taxon>Thermotogaceae</taxon>
        <taxon>Thermotoga</taxon>
    </lineage>
</organism>
<proteinExistence type="inferred from homology"/>
<comment type="function">
    <text evidence="1">One of the primary rRNA binding proteins, it binds directly to 16S rRNA where it nucleates assembly of the body of the 30S subunit.</text>
</comment>
<comment type="function">
    <text evidence="1">With S5 and S12 plays an important role in translational accuracy.</text>
</comment>
<comment type="cofactor">
    <cofactor evidence="1">
        <name>Zn(2+)</name>
        <dbReference type="ChEBI" id="CHEBI:29105"/>
    </cofactor>
    <text evidence="1">Binds 1 zinc ion per subunit.</text>
</comment>
<comment type="subunit">
    <text evidence="1">Part of the 30S ribosomal subunit. Contacts protein S5. The interaction surface between S4 and S5 is involved in control of translational fidelity (By similarity).</text>
</comment>
<comment type="similarity">
    <text evidence="2">Belongs to the universal ribosomal protein uS4 family.</text>
</comment>
<dbReference type="EMBL" id="AE000512">
    <property type="protein sequence ID" value="AAD36541.1"/>
    <property type="molecule type" value="Genomic_DNA"/>
</dbReference>
<dbReference type="PIR" id="B72247">
    <property type="entry name" value="B72247"/>
</dbReference>
<dbReference type="RefSeq" id="NP_229273.1">
    <property type="nucleotide sequence ID" value="NC_000853.1"/>
</dbReference>
<dbReference type="RefSeq" id="WP_004081780.1">
    <property type="nucleotide sequence ID" value="NC_000853.1"/>
</dbReference>
<dbReference type="SMR" id="Q9X1I3"/>
<dbReference type="FunCoup" id="Q9X1I3">
    <property type="interactions" value="420"/>
</dbReference>
<dbReference type="STRING" id="243274.TM_1473"/>
<dbReference type="PaxDb" id="243274-THEMA_06935"/>
<dbReference type="EnsemblBacteria" id="AAD36541">
    <property type="protein sequence ID" value="AAD36541"/>
    <property type="gene ID" value="TM_1473"/>
</dbReference>
<dbReference type="KEGG" id="tma:TM1473"/>
<dbReference type="KEGG" id="tmi:THEMA_06935"/>
<dbReference type="KEGG" id="tmm:Tmari_1481"/>
<dbReference type="KEGG" id="tmw:THMA_1505"/>
<dbReference type="eggNOG" id="COG0522">
    <property type="taxonomic scope" value="Bacteria"/>
</dbReference>
<dbReference type="InParanoid" id="Q9X1I3"/>
<dbReference type="OrthoDB" id="9803672at2"/>
<dbReference type="Proteomes" id="UP000008183">
    <property type="component" value="Chromosome"/>
</dbReference>
<dbReference type="GO" id="GO:0015935">
    <property type="term" value="C:small ribosomal subunit"/>
    <property type="evidence" value="ECO:0000318"/>
    <property type="project" value="GO_Central"/>
</dbReference>
<dbReference type="GO" id="GO:0019843">
    <property type="term" value="F:rRNA binding"/>
    <property type="evidence" value="ECO:0000318"/>
    <property type="project" value="GO_Central"/>
</dbReference>
<dbReference type="GO" id="GO:0003735">
    <property type="term" value="F:structural constituent of ribosome"/>
    <property type="evidence" value="ECO:0000318"/>
    <property type="project" value="GO_Central"/>
</dbReference>
<dbReference type="GO" id="GO:0008270">
    <property type="term" value="F:zinc ion binding"/>
    <property type="evidence" value="ECO:0007669"/>
    <property type="project" value="UniProtKB-KW"/>
</dbReference>
<dbReference type="GO" id="GO:0042274">
    <property type="term" value="P:ribosomal small subunit biogenesis"/>
    <property type="evidence" value="ECO:0000318"/>
    <property type="project" value="GO_Central"/>
</dbReference>
<dbReference type="GO" id="GO:0006412">
    <property type="term" value="P:translation"/>
    <property type="evidence" value="ECO:0007669"/>
    <property type="project" value="UniProtKB-UniRule"/>
</dbReference>
<dbReference type="CDD" id="cd00165">
    <property type="entry name" value="S4"/>
    <property type="match status" value="1"/>
</dbReference>
<dbReference type="FunFam" id="1.10.1050.10:FF:000001">
    <property type="entry name" value="30S ribosomal protein S4"/>
    <property type="match status" value="1"/>
</dbReference>
<dbReference type="FunFam" id="3.10.290.10:FF:000001">
    <property type="entry name" value="30S ribosomal protein S4"/>
    <property type="match status" value="1"/>
</dbReference>
<dbReference type="Gene3D" id="1.10.1050.10">
    <property type="entry name" value="Ribosomal Protein S4 Delta 41, Chain A, domain 1"/>
    <property type="match status" value="1"/>
</dbReference>
<dbReference type="Gene3D" id="3.10.290.10">
    <property type="entry name" value="RNA-binding S4 domain"/>
    <property type="match status" value="1"/>
</dbReference>
<dbReference type="HAMAP" id="MF_01306_B">
    <property type="entry name" value="Ribosomal_uS4_B"/>
    <property type="match status" value="1"/>
</dbReference>
<dbReference type="InterPro" id="IPR022801">
    <property type="entry name" value="Ribosomal_uS4"/>
</dbReference>
<dbReference type="InterPro" id="IPR005709">
    <property type="entry name" value="Ribosomal_uS4_bac-type"/>
</dbReference>
<dbReference type="InterPro" id="IPR001912">
    <property type="entry name" value="Ribosomal_uS4_N"/>
</dbReference>
<dbReference type="InterPro" id="IPR002942">
    <property type="entry name" value="S4_RNA-bd"/>
</dbReference>
<dbReference type="InterPro" id="IPR036986">
    <property type="entry name" value="S4_RNA-bd_sf"/>
</dbReference>
<dbReference type="NCBIfam" id="NF003717">
    <property type="entry name" value="PRK05327.1"/>
    <property type="match status" value="1"/>
</dbReference>
<dbReference type="NCBIfam" id="TIGR01017">
    <property type="entry name" value="rpsD_bact"/>
    <property type="match status" value="1"/>
</dbReference>
<dbReference type="PANTHER" id="PTHR11831">
    <property type="entry name" value="30S 40S RIBOSOMAL PROTEIN"/>
    <property type="match status" value="1"/>
</dbReference>
<dbReference type="PANTHER" id="PTHR11831:SF4">
    <property type="entry name" value="SMALL RIBOSOMAL SUBUNIT PROTEIN US4M"/>
    <property type="match status" value="1"/>
</dbReference>
<dbReference type="Pfam" id="PF00163">
    <property type="entry name" value="Ribosomal_S4"/>
    <property type="match status" value="1"/>
</dbReference>
<dbReference type="Pfam" id="PF01479">
    <property type="entry name" value="S4"/>
    <property type="match status" value="1"/>
</dbReference>
<dbReference type="SMART" id="SM01390">
    <property type="entry name" value="Ribosomal_S4"/>
    <property type="match status" value="1"/>
</dbReference>
<dbReference type="SMART" id="SM00363">
    <property type="entry name" value="S4"/>
    <property type="match status" value="1"/>
</dbReference>
<dbReference type="SUPFAM" id="SSF55174">
    <property type="entry name" value="Alpha-L RNA-binding motif"/>
    <property type="match status" value="1"/>
</dbReference>
<dbReference type="PROSITE" id="PS50889">
    <property type="entry name" value="S4"/>
    <property type="match status" value="1"/>
</dbReference>
<accession>Q9X1I3</accession>